<accession>Q7RY78</accession>
<reference key="1">
    <citation type="journal article" date="2003" name="Nature">
        <title>The genome sequence of the filamentous fungus Neurospora crassa.</title>
        <authorList>
            <person name="Galagan J.E."/>
            <person name="Calvo S.E."/>
            <person name="Borkovich K.A."/>
            <person name="Selker E.U."/>
            <person name="Read N.D."/>
            <person name="Jaffe D.B."/>
            <person name="FitzHugh W."/>
            <person name="Ma L.-J."/>
            <person name="Smirnov S."/>
            <person name="Purcell S."/>
            <person name="Rehman B."/>
            <person name="Elkins T."/>
            <person name="Engels R."/>
            <person name="Wang S."/>
            <person name="Nielsen C.B."/>
            <person name="Butler J."/>
            <person name="Endrizzi M."/>
            <person name="Qui D."/>
            <person name="Ianakiev P."/>
            <person name="Bell-Pedersen D."/>
            <person name="Nelson M.A."/>
            <person name="Werner-Washburne M."/>
            <person name="Selitrennikoff C.P."/>
            <person name="Kinsey J.A."/>
            <person name="Braun E.L."/>
            <person name="Zelter A."/>
            <person name="Schulte U."/>
            <person name="Kothe G.O."/>
            <person name="Jedd G."/>
            <person name="Mewes H.-W."/>
            <person name="Staben C."/>
            <person name="Marcotte E."/>
            <person name="Greenberg D."/>
            <person name="Roy A."/>
            <person name="Foley K."/>
            <person name="Naylor J."/>
            <person name="Stange-Thomann N."/>
            <person name="Barrett R."/>
            <person name="Gnerre S."/>
            <person name="Kamal M."/>
            <person name="Kamvysselis M."/>
            <person name="Mauceli E.W."/>
            <person name="Bielke C."/>
            <person name="Rudd S."/>
            <person name="Frishman D."/>
            <person name="Krystofova S."/>
            <person name="Rasmussen C."/>
            <person name="Metzenberg R.L."/>
            <person name="Perkins D.D."/>
            <person name="Kroken S."/>
            <person name="Cogoni C."/>
            <person name="Macino G."/>
            <person name="Catcheside D.E.A."/>
            <person name="Li W."/>
            <person name="Pratt R.J."/>
            <person name="Osmani S.A."/>
            <person name="DeSouza C.P.C."/>
            <person name="Glass N.L."/>
            <person name="Orbach M.J."/>
            <person name="Berglund J.A."/>
            <person name="Voelker R."/>
            <person name="Yarden O."/>
            <person name="Plamann M."/>
            <person name="Seiler S."/>
            <person name="Dunlap J.C."/>
            <person name="Radford A."/>
            <person name="Aramayo R."/>
            <person name="Natvig D.O."/>
            <person name="Alex L.A."/>
            <person name="Mannhaupt G."/>
            <person name="Ebbole D.J."/>
            <person name="Freitag M."/>
            <person name="Paulsen I."/>
            <person name="Sachs M.S."/>
            <person name="Lander E.S."/>
            <person name="Nusbaum C."/>
            <person name="Birren B.W."/>
        </authorList>
    </citation>
    <scope>NUCLEOTIDE SEQUENCE [LARGE SCALE GENOMIC DNA]</scope>
    <source>
        <strain>ATCC 24698 / 74-OR23-1A / CBS 708.71 / DSM 1257 / FGSC 987</strain>
    </source>
</reference>
<gene>
    <name type="primary">tsp-1</name>
    <name type="synonym">sen15</name>
    <name type="ORF">NCU00027</name>
</gene>
<evidence type="ECO:0000250" key="1"/>
<evidence type="ECO:0000256" key="2">
    <source>
        <dbReference type="SAM" id="MobiDB-lite"/>
    </source>
</evidence>
<evidence type="ECO:0000305" key="3"/>
<keyword id="KW-1185">Reference proteome</keyword>
<keyword id="KW-0819">tRNA processing</keyword>
<feature type="chain" id="PRO_0000194026" description="Probable tRNA-splicing endonuclease subunit tsp-1">
    <location>
        <begin position="1"/>
        <end position="223"/>
    </location>
</feature>
<feature type="region of interest" description="Disordered" evidence="2">
    <location>
        <begin position="1"/>
        <end position="55"/>
    </location>
</feature>
<feature type="compositionally biased region" description="Low complexity" evidence="2">
    <location>
        <begin position="30"/>
        <end position="55"/>
    </location>
</feature>
<proteinExistence type="inferred from homology"/>
<organism>
    <name type="scientific">Neurospora crassa (strain ATCC 24698 / 74-OR23-1A / CBS 708.71 / DSM 1257 / FGSC 987)</name>
    <dbReference type="NCBI Taxonomy" id="367110"/>
    <lineage>
        <taxon>Eukaryota</taxon>
        <taxon>Fungi</taxon>
        <taxon>Dikarya</taxon>
        <taxon>Ascomycota</taxon>
        <taxon>Pezizomycotina</taxon>
        <taxon>Sordariomycetes</taxon>
        <taxon>Sordariomycetidae</taxon>
        <taxon>Sordariales</taxon>
        <taxon>Sordariaceae</taxon>
        <taxon>Neurospora</taxon>
    </lineage>
</organism>
<protein>
    <recommendedName>
        <fullName>Probable tRNA-splicing endonuclease subunit tsp-1</fullName>
    </recommendedName>
    <alternativeName>
        <fullName>tRNA-intron endonuclease sen15</fullName>
    </alternativeName>
    <alternativeName>
        <fullName>tRNA-splicing protein 1</fullName>
    </alternativeName>
</protein>
<dbReference type="EMBL" id="CM002238">
    <property type="protein sequence ID" value="EAA27778.1"/>
    <property type="molecule type" value="Genomic_DNA"/>
</dbReference>
<dbReference type="RefSeq" id="XP_957014.1">
    <property type="nucleotide sequence ID" value="XM_951921.2"/>
</dbReference>
<dbReference type="FunCoup" id="Q7RY78">
    <property type="interactions" value="70"/>
</dbReference>
<dbReference type="STRING" id="367110.Q7RY78"/>
<dbReference type="PaxDb" id="5141-EFNCRP00000000006"/>
<dbReference type="EnsemblFungi" id="EAA27778">
    <property type="protein sequence ID" value="EAA27778"/>
    <property type="gene ID" value="NCU00027"/>
</dbReference>
<dbReference type="GeneID" id="3873152"/>
<dbReference type="KEGG" id="ncr:NCU00027"/>
<dbReference type="VEuPathDB" id="FungiDB:NCU00027"/>
<dbReference type="HOGENOM" id="CLU_083361_1_0_1"/>
<dbReference type="InParanoid" id="Q7RY78"/>
<dbReference type="OrthoDB" id="10002170at2759"/>
<dbReference type="Proteomes" id="UP000001805">
    <property type="component" value="Chromosome 3, Linkage Group III"/>
</dbReference>
<dbReference type="GO" id="GO:0000214">
    <property type="term" value="C:tRNA-intron endonuclease complex"/>
    <property type="evidence" value="ECO:0000318"/>
    <property type="project" value="GO_Central"/>
</dbReference>
<dbReference type="GO" id="GO:0003676">
    <property type="term" value="F:nucleic acid binding"/>
    <property type="evidence" value="ECO:0007669"/>
    <property type="project" value="InterPro"/>
</dbReference>
<dbReference type="GO" id="GO:0000379">
    <property type="term" value="P:tRNA-type intron splice site recognition and cleavage"/>
    <property type="evidence" value="ECO:0000318"/>
    <property type="project" value="GO_Central"/>
</dbReference>
<dbReference type="FunFam" id="3.40.1350.10:FF:000012">
    <property type="entry name" value="Probable tRNA-splicing endonuclease subunit sen-15"/>
    <property type="match status" value="1"/>
</dbReference>
<dbReference type="Gene3D" id="3.40.1350.10">
    <property type="match status" value="1"/>
</dbReference>
<dbReference type="InterPro" id="IPR042777">
    <property type="entry name" value="Sen15_fungi"/>
</dbReference>
<dbReference type="InterPro" id="IPR018593">
    <property type="entry name" value="tRNA-endonuc_su_Sen15"/>
</dbReference>
<dbReference type="InterPro" id="IPR011856">
    <property type="entry name" value="tRNA_endonuc-like_dom_sf"/>
</dbReference>
<dbReference type="InterPro" id="IPR036167">
    <property type="entry name" value="tRNA_intron_Endo_cat-like_sf"/>
</dbReference>
<dbReference type="PANTHER" id="PTHR28518">
    <property type="entry name" value="TRNA-SPLICING ENDONUCLEASE SUBUNIT SEN15"/>
    <property type="match status" value="1"/>
</dbReference>
<dbReference type="PANTHER" id="PTHR28518:SF1">
    <property type="entry name" value="TRNA-SPLICING ENDONUCLEASE SUBUNIT SEN15"/>
    <property type="match status" value="1"/>
</dbReference>
<dbReference type="Pfam" id="PF09631">
    <property type="entry name" value="Sen15"/>
    <property type="match status" value="1"/>
</dbReference>
<dbReference type="SUPFAM" id="SSF53032">
    <property type="entry name" value="tRNA-intron endonuclease catalytic domain-like"/>
    <property type="match status" value="1"/>
</dbReference>
<name>SEN15_NEUCR</name>
<comment type="function">
    <text evidence="1">Non-catalytic subunit of the tRNA-splicing endonuclease complex, a complex responsible for identification and cleavage of the splice sites in pre-tRNA. It cleaves pre-tRNA at the 5' and 3' splice sites to release the intron. The products are an intron and two tRNA half-molecules bearing 2',3' cyclic phosphate and 5'-OH termini. There are no conserved sequences at the splice sites, but the intron is invariably located at the same site in the gene, placing the splice sites an invariant distance from the constant structural features of the tRNA body (By similarity).</text>
</comment>
<comment type="subunit">
    <text evidence="1">tRNA splicing endonuclease is a heterotetramer composed of tsp-2/sen2, tsp-1/sen15, tsp-4/sen34 and tsp-5/sen54. Interacts directly with tsp-4/sen34 (By similarity).</text>
</comment>
<comment type="similarity">
    <text evidence="3">Belongs to the SEN15 family.</text>
</comment>
<sequence length="223" mass="25366">MESGSTPPTDKQIRENEQDGTGHQGKLLARPTSTRQQQQQQQQQPSHSVSQSVSQSPQTQDCLTIVANMSADQHLQALTKVVVNNLENQHDWTQVQIHIQDNLPRPLIYGLPPKRLYVHPDEQIDIIRAEKQLNQRVPQEPELEWVLPLHLAEKWSISDFAAVFDAITALPPGGESVNANEDAQWQLWRGPKRGKRILLATVQDDSTVTYYWMHNGLVKPRQN</sequence>